<accession>A0A0H3GPK2</accession>
<dbReference type="EMBL" id="CP003200">
    <property type="protein sequence ID" value="AEW60087.1"/>
    <property type="molecule type" value="Genomic_DNA"/>
</dbReference>
<dbReference type="RefSeq" id="WP_002893035.1">
    <property type="nucleotide sequence ID" value="NC_016845.1"/>
</dbReference>
<dbReference type="RefSeq" id="YP_005225689.1">
    <property type="nucleotide sequence ID" value="NC_016845.1"/>
</dbReference>
<dbReference type="PDB" id="7BEF">
    <property type="method" value="EM"/>
    <property type="resolution" value="4.50 A"/>
    <property type="chains" value="G=1-113"/>
</dbReference>
<dbReference type="PDB" id="7BEG">
    <property type="method" value="EM"/>
    <property type="resolution" value="4.20 A"/>
    <property type="chains" value="G=1-113"/>
</dbReference>
<dbReference type="PDBsum" id="7BEF"/>
<dbReference type="PDBsum" id="7BEG"/>
<dbReference type="SMR" id="A0A0H3GPK2"/>
<dbReference type="STRING" id="1125630.KPHS_13890"/>
<dbReference type="GeneID" id="11846390"/>
<dbReference type="KEGG" id="kpm:KPHS_13890"/>
<dbReference type="PATRIC" id="fig|1125630.4.peg.1349"/>
<dbReference type="HOGENOM" id="CLU_000445_81_14_6"/>
<dbReference type="Proteomes" id="UP000007841">
    <property type="component" value="Chromosome"/>
</dbReference>
<dbReference type="GO" id="GO:0003700">
    <property type="term" value="F:DNA-binding transcription factor activity"/>
    <property type="evidence" value="ECO:0007669"/>
    <property type="project" value="InterPro"/>
</dbReference>
<dbReference type="GO" id="GO:0043565">
    <property type="term" value="F:sequence-specific DNA binding"/>
    <property type="evidence" value="ECO:0007669"/>
    <property type="project" value="InterPro"/>
</dbReference>
<dbReference type="Gene3D" id="1.10.10.60">
    <property type="entry name" value="Homeodomain-like"/>
    <property type="match status" value="2"/>
</dbReference>
<dbReference type="InterPro" id="IPR009057">
    <property type="entry name" value="Homeodomain-like_sf"/>
</dbReference>
<dbReference type="InterPro" id="IPR018060">
    <property type="entry name" value="HTH_AraC"/>
</dbReference>
<dbReference type="InterPro" id="IPR018062">
    <property type="entry name" value="HTH_AraC-typ_CS"/>
</dbReference>
<dbReference type="InterPro" id="IPR050959">
    <property type="entry name" value="MarA-like"/>
</dbReference>
<dbReference type="InterPro" id="IPR020449">
    <property type="entry name" value="Tscrpt_reg_AraC-type_HTH"/>
</dbReference>
<dbReference type="NCBIfam" id="NF012144">
    <property type="entry name" value="ramA_TF"/>
    <property type="match status" value="1"/>
</dbReference>
<dbReference type="PANTHER" id="PTHR47504:SF2">
    <property type="entry name" value="REGULATORY PROTEIN SOXS"/>
    <property type="match status" value="1"/>
</dbReference>
<dbReference type="PANTHER" id="PTHR47504">
    <property type="entry name" value="RIGHT ORIGIN-BINDING PROTEIN"/>
    <property type="match status" value="1"/>
</dbReference>
<dbReference type="Pfam" id="PF12833">
    <property type="entry name" value="HTH_18"/>
    <property type="match status" value="1"/>
</dbReference>
<dbReference type="PRINTS" id="PR00032">
    <property type="entry name" value="HTHARAC"/>
</dbReference>
<dbReference type="SMART" id="SM00342">
    <property type="entry name" value="HTH_ARAC"/>
    <property type="match status" value="1"/>
</dbReference>
<dbReference type="SUPFAM" id="SSF46689">
    <property type="entry name" value="Homeodomain-like"/>
    <property type="match status" value="2"/>
</dbReference>
<dbReference type="PROSITE" id="PS00041">
    <property type="entry name" value="HTH_ARAC_FAMILY_1"/>
    <property type="match status" value="1"/>
</dbReference>
<dbReference type="PROSITE" id="PS01124">
    <property type="entry name" value="HTH_ARAC_FAMILY_2"/>
    <property type="match status" value="1"/>
</dbReference>
<gene>
    <name evidence="1" type="primary">ramA</name>
    <name evidence="9" type="ordered locus">KPHS_13890</name>
</gene>
<name>RAMA_KLEPH</name>
<evidence type="ECO:0000250" key="1">
    <source>
        <dbReference type="UniProtKB" id="H9L484"/>
    </source>
</evidence>
<evidence type="ECO:0000255" key="2">
    <source>
        <dbReference type="PROSITE-ProRule" id="PRU00593"/>
    </source>
</evidence>
<evidence type="ECO:0000269" key="3">
    <source>
    </source>
</evidence>
<evidence type="ECO:0000269" key="4">
    <source>
    </source>
</evidence>
<evidence type="ECO:0000269" key="5">
    <source>
    </source>
</evidence>
<evidence type="ECO:0000303" key="6">
    <source>
    </source>
</evidence>
<evidence type="ECO:0000303" key="7">
    <source>
    </source>
</evidence>
<evidence type="ECO:0000305" key="8"/>
<evidence type="ECO:0000312" key="9">
    <source>
        <dbReference type="EMBL" id="AEW60087.1"/>
    </source>
</evidence>
<evidence type="ECO:0000312" key="10">
    <source>
        <dbReference type="PDB" id="7BEF"/>
    </source>
</evidence>
<evidence type="ECO:0000312" key="11">
    <source>
        <dbReference type="PDB" id="7BEG"/>
    </source>
</evidence>
<evidence type="ECO:0000312" key="12">
    <source>
        <dbReference type="Proteomes" id="UP000007841"/>
    </source>
</evidence>
<reference evidence="12" key="1">
    <citation type="journal article" date="2012" name="J. Bacteriol.">
        <title>Complete genome sequence of Klebsiella pneumoniae subsp. pneumoniae HS11286, a multidrug-resistant strain isolated from human sputum.</title>
        <authorList>
            <person name="Liu P."/>
            <person name="Li P."/>
            <person name="Jiang X."/>
            <person name="Bi D."/>
            <person name="Xie Y."/>
            <person name="Tai C."/>
            <person name="Deng Z."/>
            <person name="Rajakumar K."/>
            <person name="Ou H.Y."/>
        </authorList>
    </citation>
    <scope>NUCLEOTIDE SEQUENCE [LARGE SCALE GENOMIC DNA]</scope>
    <source>
        <strain evidence="12">HS11286</strain>
    </source>
</reference>
<reference evidence="8" key="2">
    <citation type="journal article" date="2011" name="Int. J. Antimicrob. Agents">
        <title>Genetic regulation of the ramA locus and its expression in clinical isolates of Klebsiella pneumoniae.</title>
        <authorList>
            <person name="Rosenblum R."/>
            <person name="Khan E."/>
            <person name="Gonzalez G."/>
            <person name="Hasan R."/>
            <person name="Schneiders T."/>
        </authorList>
    </citation>
    <scope>FUNCTION</scope>
    <scope>INDUCTION</scope>
    <source>
        <strain evidence="6">ECL8</strain>
    </source>
</reference>
<reference evidence="8" key="3">
    <citation type="journal article" date="2015" name="PLoS Pathog.">
        <title>Elucidation of the RamA regulon in Klebsiella pneumoniae reveals a role in LPS regulation.</title>
        <authorList>
            <person name="De Majumdar S."/>
            <person name="Yu J."/>
            <person name="Fookes M."/>
            <person name="McAteer S.P."/>
            <person name="Llobet E."/>
            <person name="Finn S."/>
            <person name="Spence S."/>
            <person name="Monahan A."/>
            <person name="Monaghan A."/>
            <person name="Kissenpfennig A."/>
            <person name="Ingram R.J."/>
            <person name="Bengoechea J."/>
            <person name="Gally D.L."/>
            <person name="Fanning S."/>
            <person name="Elborn J.S."/>
            <person name="Schneiders T."/>
        </authorList>
    </citation>
    <scope>FUNCTION</scope>
    <source>
        <strain evidence="6">ECL8</strain>
    </source>
</reference>
<reference evidence="10 11" key="4">
    <citation type="journal article" date="2022" name="Adv. Sci.">
        <title>Structures of Class I and Class II Transcription Complexes Reveal the Molecular Basis of RamA-Dependent Transcription Activation.</title>
        <authorList>
            <person name="Hao M."/>
            <person name="Ye F."/>
            <person name="Jovanovic M."/>
            <person name="Kotta-Loizou I."/>
            <person name="Xu Q."/>
            <person name="Qin X."/>
            <person name="Buck M."/>
            <person name="Zhang X."/>
            <person name="Wang M."/>
        </authorList>
    </citation>
    <scope>STRUCTURE BY ELECTRON MICROSCOPY (4.2 ANGSTROMS) OF 1-113 IN COMPLEX WITH E.COLI RPOA; E.COLI RPOB; E.COLI RPOC; E.COLI RPOD; E.COLI RPOZ AND DNA</scope>
    <scope>FUNCTION</scope>
    <scope>DISRUPTION PHENOTYPE</scope>
    <scope>MUTAGENESIS OF HIS-31 AND 75-TYR--ASP-84</scope>
    <source>
        <strain evidence="7">KP22</strain>
    </source>
</reference>
<protein>
    <recommendedName>
        <fullName evidence="8">Transcriptional regulator RamA</fullName>
    </recommendedName>
</protein>
<keyword id="KW-0002">3D-structure</keyword>
<keyword id="KW-0238">DNA-binding</keyword>
<keyword id="KW-1185">Reference proteome</keyword>
<keyword id="KW-0804">Transcription</keyword>
<keyword id="KW-0805">Transcription regulation</keyword>
<proteinExistence type="evidence at protein level"/>
<feature type="chain" id="PRO_0000460030" description="Transcriptional regulator RamA">
    <location>
        <begin position="1"/>
        <end position="113"/>
    </location>
</feature>
<feature type="domain" description="HTH araC/xylS-type" evidence="2">
    <location>
        <begin position="9"/>
        <end position="107"/>
    </location>
</feature>
<feature type="DNA-binding region" description="H-T-H motif" evidence="2">
    <location>
        <begin position="26"/>
        <end position="47"/>
    </location>
</feature>
<feature type="DNA-binding region" description="H-T-H motif" evidence="2">
    <location>
        <begin position="74"/>
        <end position="97"/>
    </location>
</feature>
<feature type="mutagenesis site" description="Transcriptional activation activity declines significantly on either acrA or micF gene promoters. Mutation in the KP22 isolate causes bacteria to become sensitive to many antibiotics, including tigecycline, doxycycline, minocycline, piperacillin-tazobactam, ceftazidime and levofloxacin." evidence="5">
    <original>H</original>
    <variation>D</variation>
    <location>
        <position position="31"/>
    </location>
</feature>
<feature type="mutagenesis site" description="Transcriptional activation activity only decreased slightly on acrA gene promoter, but declines significantly on micF gene promoter. Minimal effect on antibiotic sensitivity of the KP22 isolate." evidence="5">
    <original>YDICLKYGFD</original>
    <variation>RRICLKYGFR</variation>
    <location>
        <begin position="75"/>
        <end position="84"/>
    </location>
</feature>
<sequence>MTISAQVIDTIVEWIDDNLHQPLRIDDIARHAGYSKWHLQRLFLQYKGESLGRYIRERKLLLAARDLRDTDQRVYDICLKYGFDSQQTFTRVFTRTFNQPPGAYRKENHSRAH</sequence>
<comment type="function">
    <text evidence="3 4 5">Transcriptional regulator (PubMed:25633080, PubMed:34761556). Binds to regulatory regions of target genes, including its own gene, efflux pump operon acrAB, antisense RNA gene micF, and various genes involved in lipid A biosynthesis, including lpxO and lpxL-2 (PubMed:21514798, PubMed:25633080, PubMed:34761556). Regulates expression of many genes, perhaps including its own; activates various lipid A biosynthetic genes, and as a result of activating acrAB, confers multidrug resistance (PubMed:21514798, PubMed:25633080, PubMed:34761556). Plays a role in virulence and survival in host cells (PubMed:25633080).</text>
</comment>
<comment type="subunit">
    <text evidence="5">Monomer (PubMed:34761556). Interacts with the C-terminus of RNAP subunit RpoA when part of class I or class II promoter complexes (PubMed:34761556). Also interacts with sigma-70/RpoD in class II promoter complexes (PubMed:34761556).</text>
</comment>
<comment type="induction">
    <text evidence="3">Part of a putative romA-ramA operon.</text>
</comment>
<comment type="disruption phenotype">
    <text evidence="5">Deletion in clinical multidrug-resistant isolate KP22 increases sensitivity to many antibiotics, including tigecycline, doxycycline, minocycline, piperacillin-tazobactam, ceftazidime and levofloxacin.</text>
</comment>
<comment type="miscellaneous">
    <text evidence="3">Overexpression of ramA in various clinical isolates confers multidrug resistance.</text>
</comment>
<organism evidence="12">
    <name type="scientific">Klebsiella pneumoniae subsp. pneumoniae (strain HS11286)</name>
    <dbReference type="NCBI Taxonomy" id="1125630"/>
    <lineage>
        <taxon>Bacteria</taxon>
        <taxon>Pseudomonadati</taxon>
        <taxon>Pseudomonadota</taxon>
        <taxon>Gammaproteobacteria</taxon>
        <taxon>Enterobacterales</taxon>
        <taxon>Enterobacteriaceae</taxon>
        <taxon>Klebsiella/Raoultella group</taxon>
        <taxon>Klebsiella</taxon>
        <taxon>Klebsiella pneumoniae complex</taxon>
    </lineage>
</organism>